<keyword id="KW-0229">DNA integration</keyword>
<keyword id="KW-0233">DNA recombination</keyword>
<keyword id="KW-0255">Endonuclease</keyword>
<keyword id="KW-0378">Hydrolase</keyword>
<keyword id="KW-0460">Magnesium</keyword>
<keyword id="KW-0479">Metal-binding</keyword>
<keyword id="KW-0511">Multifunctional enzyme</keyword>
<keyword id="KW-0540">Nuclease</keyword>
<keyword id="KW-0548">Nucleotidyltransferase</keyword>
<keyword id="KW-0695">RNA-directed DNA polymerase</keyword>
<keyword id="KW-0808">Transferase</keyword>
<keyword id="KW-1179">Viral genome integration</keyword>
<keyword id="KW-1160">Virus entry into host cell</keyword>
<gene>
    <name type="primary">pol</name>
</gene>
<organism>
    <name type="scientific">Feline endogenous virus ECE1</name>
    <dbReference type="NCBI Taxonomy" id="11766"/>
    <lineage>
        <taxon>Viruses</taxon>
        <taxon>Riboviria</taxon>
        <taxon>Pararnavirae</taxon>
        <taxon>Artverviricota</taxon>
        <taxon>Revtraviricetes</taxon>
        <taxon>Ortervirales</taxon>
        <taxon>Retroviridae</taxon>
        <taxon>Orthoretrovirinae</taxon>
        <taxon>Gammaretrovirus</taxon>
        <taxon>Feline endogenous virus</taxon>
    </lineage>
</organism>
<feature type="chain" id="PRO_0000040980" description="Reverse transcriptase/ribonuclease H">
    <location>
        <begin position="1" status="less than"/>
        <end position="647"/>
    </location>
</feature>
<feature type="chain" id="PRO_0000040981" description="Integrase">
    <location>
        <begin position="648"/>
        <end position="1046"/>
    </location>
</feature>
<feature type="domain" description="Reverse transcriptase" evidence="2">
    <location>
        <begin position="55"/>
        <end position="248"/>
    </location>
</feature>
<feature type="domain" description="RNase H type-1" evidence="3">
    <location>
        <begin position="491"/>
        <end position="637"/>
    </location>
</feature>
<feature type="domain" description="Integrase catalytic" evidence="4">
    <location>
        <begin position="757"/>
        <end position="915"/>
    </location>
</feature>
<feature type="binding site" evidence="3">
    <location>
        <position position="500"/>
    </location>
    <ligand>
        <name>Mg(2+)</name>
        <dbReference type="ChEBI" id="CHEBI:18420"/>
        <label>1</label>
    </ligand>
</feature>
<feature type="binding site" evidence="3">
    <location>
        <position position="500"/>
    </location>
    <ligand>
        <name>Mg(2+)</name>
        <dbReference type="ChEBI" id="CHEBI:18420"/>
        <label>2</label>
    </ligand>
</feature>
<feature type="binding site" evidence="3">
    <location>
        <position position="538"/>
    </location>
    <ligand>
        <name>Mg(2+)</name>
        <dbReference type="ChEBI" id="CHEBI:18420"/>
        <label>1</label>
    </ligand>
</feature>
<feature type="binding site" evidence="3">
    <location>
        <position position="559"/>
    </location>
    <ligand>
        <name>Mg(2+)</name>
        <dbReference type="ChEBI" id="CHEBI:18420"/>
        <label>1</label>
    </ligand>
</feature>
<feature type="binding site" evidence="3">
    <location>
        <position position="629"/>
    </location>
    <ligand>
        <name>Mg(2+)</name>
        <dbReference type="ChEBI" id="CHEBI:18420"/>
        <label>2</label>
    </ligand>
</feature>
<feature type="non-terminal residue">
    <location>
        <position position="1"/>
    </location>
</feature>
<proteinExistence type="inferred from homology"/>
<reference key="1">
    <citation type="submission" date="1990-02" db="EMBL/GenBank/DDBJ databases">
        <title>The exogenous RD-114 and the related endogenous proviral element ECE1 of domestic cat differ in their env genes.</title>
        <authorList>
            <person name="Moehring R."/>
            <person name="Drescher B."/>
            <person name="Riedel H."/>
            <person name="Bauer D."/>
            <person name="Rohde K."/>
            <person name="Beyer W."/>
            <person name="Rosenthal S."/>
        </authorList>
    </citation>
    <scope>NUCLEOTIDE SEQUENCE [GENOMIC DNA]</scope>
</reference>
<dbReference type="EC" id="2.7.7.49"/>
<dbReference type="EC" id="2.7.7.7"/>
<dbReference type="EC" id="3.1.26.4"/>
<dbReference type="EC" id="2.7.7.-" evidence="1"/>
<dbReference type="EC" id="3.1.-.-" evidence="1"/>
<dbReference type="EMBL" id="X51929">
    <property type="protein sequence ID" value="CAB38566.1"/>
    <property type="molecule type" value="Genomic_DNA"/>
</dbReference>
<dbReference type="PIR" id="S12813">
    <property type="entry name" value="GNMVCE"/>
</dbReference>
<dbReference type="SMR" id="P31792"/>
<dbReference type="GO" id="GO:0003887">
    <property type="term" value="F:DNA-directed DNA polymerase activity"/>
    <property type="evidence" value="ECO:0007669"/>
    <property type="project" value="UniProtKB-EC"/>
</dbReference>
<dbReference type="GO" id="GO:0046872">
    <property type="term" value="F:metal ion binding"/>
    <property type="evidence" value="ECO:0007669"/>
    <property type="project" value="UniProtKB-KW"/>
</dbReference>
<dbReference type="GO" id="GO:0003676">
    <property type="term" value="F:nucleic acid binding"/>
    <property type="evidence" value="ECO:0007669"/>
    <property type="project" value="InterPro"/>
</dbReference>
<dbReference type="GO" id="GO:0003964">
    <property type="term" value="F:RNA-directed DNA polymerase activity"/>
    <property type="evidence" value="ECO:0007669"/>
    <property type="project" value="UniProtKB-KW"/>
</dbReference>
<dbReference type="GO" id="GO:0004523">
    <property type="term" value="F:RNA-DNA hybrid ribonuclease activity"/>
    <property type="evidence" value="ECO:0007669"/>
    <property type="project" value="UniProtKB-EC"/>
</dbReference>
<dbReference type="GO" id="GO:0015074">
    <property type="term" value="P:DNA integration"/>
    <property type="evidence" value="ECO:0007669"/>
    <property type="project" value="UniProtKB-KW"/>
</dbReference>
<dbReference type="GO" id="GO:0006310">
    <property type="term" value="P:DNA recombination"/>
    <property type="evidence" value="ECO:0007669"/>
    <property type="project" value="UniProtKB-KW"/>
</dbReference>
<dbReference type="GO" id="GO:0075713">
    <property type="term" value="P:establishment of integrated proviral latency"/>
    <property type="evidence" value="ECO:0007669"/>
    <property type="project" value="UniProtKB-KW"/>
</dbReference>
<dbReference type="GO" id="GO:0046718">
    <property type="term" value="P:symbiont entry into host cell"/>
    <property type="evidence" value="ECO:0007669"/>
    <property type="project" value="UniProtKB-KW"/>
</dbReference>
<dbReference type="GO" id="GO:0044826">
    <property type="term" value="P:viral genome integration into host DNA"/>
    <property type="evidence" value="ECO:0007669"/>
    <property type="project" value="UniProtKB-KW"/>
</dbReference>
<dbReference type="CDD" id="cd09273">
    <property type="entry name" value="RNase_HI_RT_Bel"/>
    <property type="match status" value="1"/>
</dbReference>
<dbReference type="CDD" id="cd03715">
    <property type="entry name" value="RT_ZFREV_like"/>
    <property type="match status" value="1"/>
</dbReference>
<dbReference type="FunFam" id="3.30.70.270:FF:000020">
    <property type="entry name" value="Transposon Tf2-6 polyprotein-like Protein"/>
    <property type="match status" value="1"/>
</dbReference>
<dbReference type="Gene3D" id="1.10.340.70">
    <property type="match status" value="1"/>
</dbReference>
<dbReference type="Gene3D" id="2.30.30.850">
    <property type="match status" value="1"/>
</dbReference>
<dbReference type="Gene3D" id="3.10.20.370">
    <property type="match status" value="1"/>
</dbReference>
<dbReference type="Gene3D" id="3.30.70.270">
    <property type="match status" value="2"/>
</dbReference>
<dbReference type="Gene3D" id="3.10.10.10">
    <property type="entry name" value="HIV Type 1 Reverse Transcriptase, subunit A, domain 1"/>
    <property type="match status" value="1"/>
</dbReference>
<dbReference type="Gene3D" id="3.30.420.10">
    <property type="entry name" value="Ribonuclease H-like superfamily/Ribonuclease H"/>
    <property type="match status" value="2"/>
</dbReference>
<dbReference type="InterPro" id="IPR043502">
    <property type="entry name" value="DNA/RNA_pol_sf"/>
</dbReference>
<dbReference type="InterPro" id="IPR001584">
    <property type="entry name" value="Integrase_cat-core"/>
</dbReference>
<dbReference type="InterPro" id="IPR040643">
    <property type="entry name" value="MLVIN_C"/>
</dbReference>
<dbReference type="InterPro" id="IPR043128">
    <property type="entry name" value="Rev_trsase/Diguanyl_cyclase"/>
</dbReference>
<dbReference type="InterPro" id="IPR012337">
    <property type="entry name" value="RNaseH-like_sf"/>
</dbReference>
<dbReference type="InterPro" id="IPR002156">
    <property type="entry name" value="RNaseH_domain"/>
</dbReference>
<dbReference type="InterPro" id="IPR036397">
    <property type="entry name" value="RNaseH_sf"/>
</dbReference>
<dbReference type="InterPro" id="IPR000477">
    <property type="entry name" value="RT_dom"/>
</dbReference>
<dbReference type="InterPro" id="IPR041577">
    <property type="entry name" value="RT_RNaseH_2"/>
</dbReference>
<dbReference type="InterPro" id="IPR051320">
    <property type="entry name" value="Viral_Replic_Matur_Polypro"/>
</dbReference>
<dbReference type="InterPro" id="IPR015416">
    <property type="entry name" value="Znf_H2C2_histone_UAS-bd"/>
</dbReference>
<dbReference type="PANTHER" id="PTHR33064:SF38">
    <property type="entry name" value="LRRGT00076-LIKE"/>
    <property type="match status" value="1"/>
</dbReference>
<dbReference type="PANTHER" id="PTHR33064">
    <property type="entry name" value="POL PROTEIN"/>
    <property type="match status" value="1"/>
</dbReference>
<dbReference type="Pfam" id="PF18697">
    <property type="entry name" value="MLVIN_C"/>
    <property type="match status" value="1"/>
</dbReference>
<dbReference type="Pfam" id="PF00075">
    <property type="entry name" value="RNase_H"/>
    <property type="match status" value="1"/>
</dbReference>
<dbReference type="Pfam" id="PF17919">
    <property type="entry name" value="RT_RNaseH_2"/>
    <property type="match status" value="1"/>
</dbReference>
<dbReference type="Pfam" id="PF00665">
    <property type="entry name" value="rve"/>
    <property type="match status" value="1"/>
</dbReference>
<dbReference type="Pfam" id="PF00078">
    <property type="entry name" value="RVT_1"/>
    <property type="match status" value="1"/>
</dbReference>
<dbReference type="Pfam" id="PF09337">
    <property type="entry name" value="zf-H2C2"/>
    <property type="match status" value="1"/>
</dbReference>
<dbReference type="SUPFAM" id="SSF56672">
    <property type="entry name" value="DNA/RNA polymerases"/>
    <property type="match status" value="1"/>
</dbReference>
<dbReference type="SUPFAM" id="SSF53098">
    <property type="entry name" value="Ribonuclease H-like"/>
    <property type="match status" value="2"/>
</dbReference>
<dbReference type="PROSITE" id="PS50994">
    <property type="entry name" value="INTEGRASE"/>
    <property type="match status" value="1"/>
</dbReference>
<dbReference type="PROSITE" id="PS50879">
    <property type="entry name" value="RNASE_H_1"/>
    <property type="match status" value="1"/>
</dbReference>
<dbReference type="PROSITE" id="PS50878">
    <property type="entry name" value="RT_POL"/>
    <property type="match status" value="1"/>
</dbReference>
<evidence type="ECO:0000250" key="1">
    <source>
        <dbReference type="UniProtKB" id="P03355"/>
    </source>
</evidence>
<evidence type="ECO:0000255" key="2">
    <source>
        <dbReference type="PROSITE-ProRule" id="PRU00405"/>
    </source>
</evidence>
<evidence type="ECO:0000255" key="3">
    <source>
        <dbReference type="PROSITE-ProRule" id="PRU00408"/>
    </source>
</evidence>
<evidence type="ECO:0000255" key="4">
    <source>
        <dbReference type="PROSITE-ProRule" id="PRU00457"/>
    </source>
</evidence>
<evidence type="ECO:0000305" key="5"/>
<protein>
    <recommendedName>
        <fullName>Pol polyprotein</fullName>
    </recommendedName>
    <component>
        <recommendedName>
            <fullName>Reverse transcriptase/ribonuclease H</fullName>
            <shortName>RT</shortName>
            <ecNumber>2.7.7.49</ecNumber>
            <ecNumber>2.7.7.7</ecNumber>
            <ecNumber>3.1.26.4</ecNumber>
        </recommendedName>
    </component>
    <component>
        <recommendedName>
            <fullName>Integrase</fullName>
            <shortName>IN</shortName>
            <ecNumber evidence="1">2.7.7.-</ecNumber>
            <ecNumber evidence="1">3.1.-.-</ecNumber>
        </recommendedName>
    </component>
</protein>
<sequence length="1046" mass="117101">LQDFPQAWAETGGLGRAKCQVPIIIDLKPTAMPVSIRQYPMSKEAHMGIQPHITRFLELGVLRPCRSPWNTPLLPVKKPGTRDYRPVQDLREVNKRTMDIHPTVPNPYNLLSTLSPDRTWYTVLDLKDAFFCLPLAPQSQELFAFEWRDPERGISGQLTWTRLPQGFKNSPTLFDEALHRDLTDFRTQHPEVTLLQYVDDLLLAAPTKEACIRGTKHLLRELGDKGYRASAKKAQICQTKVTYLGYILSEGKRWLTPGRIETVAHIPPPQNPREVREFLGTAGFCRLWIPGFAELAAPLYALTKESAPFTWQEKHQSAFEALKEALLSAPALGLPDTSKPFTLFIDEKQGIAKGVLTQKLGPWKRPVAYLSKKLDPVAAGWPPCLRIMAATAMLVKDSAKLTLGQPLTVITPHALEAIVRQTPDRWITNARLTHYQALLLDTDRIQFGPPVTLNPATLLPAPEDQQSAHDCRQVLAETHGTREDLKDQELPDADHSWYTDGSSYIDSGTRRAGAAVVDGHHIIWAQSLPPGTSAQKAELIALTKALELSEGKKANIYTDSRYAFATAHTHGSIYERRGLLTSEGKEIKNKAEIIALLKALFLPRKVAIIHCPGHQKGQDPIATGNRQADQVARQVAVAETLTLTTKLEETNLTTNKYAYTPEDQEEAKAIGAILNQDTKDWEKEGKIVLPRKEALAMIQQMHAWTHLSNQKLKLLIEKTDFLIPKAGTLIEQVTSACKVCQQVNAGATRVPEGKRTRGNRPGVYWEIDFTEVKPHYAGYKYLLVFVDTFSGWVEAYPTRQETAHMVAKKILEEIFPRFGLPKVIGSDNGPAFVSQVSQGLARTLGINWKLHCAYRPQSSGQVERMNRTIKETLTKLTLETGLKDWRRLLSLALLRARNTPNRFGLTPYEILYGGPPPLSTLLNSFSPSDPKTDLQARLKGLQAVQAQIWTPLAELYRPGHPQTSYPFQVGDSVYVRWHRSQGLEPRWKGPYIVLLTTPTAIKVDGIAAWIHASHAKAAPKTPGPETPKTWKLHRSENPLKIRLSRV</sequence>
<name>POL_FENV1</name>
<comment type="function">
    <text>During replicative cycle of retroviruses, the reverse-transcribed viral DNA is integrated into the host chromosome by the viral integrase enzyme. RNase H activity is associated with the reverse transcriptase.</text>
</comment>
<comment type="catalytic activity">
    <reaction evidence="2">
        <text>DNA(n) + a 2'-deoxyribonucleoside 5'-triphosphate = DNA(n+1) + diphosphate</text>
        <dbReference type="Rhea" id="RHEA:22508"/>
        <dbReference type="Rhea" id="RHEA-COMP:17339"/>
        <dbReference type="Rhea" id="RHEA-COMP:17340"/>
        <dbReference type="ChEBI" id="CHEBI:33019"/>
        <dbReference type="ChEBI" id="CHEBI:61560"/>
        <dbReference type="ChEBI" id="CHEBI:173112"/>
        <dbReference type="EC" id="2.7.7.49"/>
    </reaction>
</comment>
<comment type="catalytic activity">
    <reaction evidence="2">
        <text>DNA(n) + a 2'-deoxyribonucleoside 5'-triphosphate = DNA(n+1) + diphosphate</text>
        <dbReference type="Rhea" id="RHEA:22508"/>
        <dbReference type="Rhea" id="RHEA-COMP:17339"/>
        <dbReference type="Rhea" id="RHEA-COMP:17340"/>
        <dbReference type="ChEBI" id="CHEBI:33019"/>
        <dbReference type="ChEBI" id="CHEBI:61560"/>
        <dbReference type="ChEBI" id="CHEBI:173112"/>
        <dbReference type="EC" id="2.7.7.7"/>
    </reaction>
</comment>
<comment type="catalytic activity">
    <reaction evidence="3">
        <text>Endonucleolytic cleavage to 5'-phosphomonoester.</text>
        <dbReference type="EC" id="3.1.26.4"/>
    </reaction>
</comment>
<comment type="PTM">
    <text>Specific enzymatic cleavages in vivo yield mature proteins.</text>
</comment>
<comment type="similarity">
    <text evidence="5">Belongs to the retroviral Pol polyprotein family.</text>
</comment>
<accession>P31792</accession>
<accession>Q28415</accession>
<organismHost>
    <name type="scientific">Felidae</name>
    <name type="common">cat family</name>
    <dbReference type="NCBI Taxonomy" id="9681"/>
</organismHost>